<name>DNLJ_XYLF2</name>
<gene>
    <name evidence="1" type="primary">ligA</name>
    <name type="ordered locus">XfasM23_2047</name>
</gene>
<organism>
    <name type="scientific">Xylella fastidiosa (strain M23)</name>
    <dbReference type="NCBI Taxonomy" id="405441"/>
    <lineage>
        <taxon>Bacteria</taxon>
        <taxon>Pseudomonadati</taxon>
        <taxon>Pseudomonadota</taxon>
        <taxon>Gammaproteobacteria</taxon>
        <taxon>Lysobacterales</taxon>
        <taxon>Lysobacteraceae</taxon>
        <taxon>Xylella</taxon>
    </lineage>
</organism>
<keyword id="KW-0227">DNA damage</keyword>
<keyword id="KW-0234">DNA repair</keyword>
<keyword id="KW-0235">DNA replication</keyword>
<keyword id="KW-0436">Ligase</keyword>
<keyword id="KW-0460">Magnesium</keyword>
<keyword id="KW-0464">Manganese</keyword>
<keyword id="KW-0479">Metal-binding</keyword>
<keyword id="KW-0520">NAD</keyword>
<keyword id="KW-0862">Zinc</keyword>
<feature type="chain" id="PRO_0000380511" description="DNA ligase">
    <location>
        <begin position="1"/>
        <end position="831"/>
    </location>
</feature>
<feature type="domain" description="BRCT" evidence="1">
    <location>
        <begin position="749"/>
        <end position="831"/>
    </location>
</feature>
<feature type="active site" description="N6-AMP-lysine intermediate" evidence="1">
    <location>
        <position position="116"/>
    </location>
</feature>
<feature type="binding site" evidence="1">
    <location>
        <begin position="34"/>
        <end position="38"/>
    </location>
    <ligand>
        <name>NAD(+)</name>
        <dbReference type="ChEBI" id="CHEBI:57540"/>
    </ligand>
</feature>
<feature type="binding site" evidence="1">
    <location>
        <begin position="83"/>
        <end position="84"/>
    </location>
    <ligand>
        <name>NAD(+)</name>
        <dbReference type="ChEBI" id="CHEBI:57540"/>
    </ligand>
</feature>
<feature type="binding site" evidence="1">
    <location>
        <position position="114"/>
    </location>
    <ligand>
        <name>NAD(+)</name>
        <dbReference type="ChEBI" id="CHEBI:57540"/>
    </ligand>
</feature>
<feature type="binding site" evidence="1">
    <location>
        <position position="137"/>
    </location>
    <ligand>
        <name>NAD(+)</name>
        <dbReference type="ChEBI" id="CHEBI:57540"/>
    </ligand>
</feature>
<feature type="binding site" evidence="1">
    <location>
        <position position="174"/>
    </location>
    <ligand>
        <name>NAD(+)</name>
        <dbReference type="ChEBI" id="CHEBI:57540"/>
    </ligand>
</feature>
<feature type="binding site" evidence="1">
    <location>
        <position position="291"/>
    </location>
    <ligand>
        <name>NAD(+)</name>
        <dbReference type="ChEBI" id="CHEBI:57540"/>
    </ligand>
</feature>
<feature type="binding site" evidence="1">
    <location>
        <position position="315"/>
    </location>
    <ligand>
        <name>NAD(+)</name>
        <dbReference type="ChEBI" id="CHEBI:57540"/>
    </ligand>
</feature>
<feature type="binding site" evidence="1">
    <location>
        <position position="409"/>
    </location>
    <ligand>
        <name>Zn(2+)</name>
        <dbReference type="ChEBI" id="CHEBI:29105"/>
    </ligand>
</feature>
<feature type="binding site" evidence="1">
    <location>
        <position position="412"/>
    </location>
    <ligand>
        <name>Zn(2+)</name>
        <dbReference type="ChEBI" id="CHEBI:29105"/>
    </ligand>
</feature>
<feature type="binding site" evidence="1">
    <location>
        <position position="427"/>
    </location>
    <ligand>
        <name>Zn(2+)</name>
        <dbReference type="ChEBI" id="CHEBI:29105"/>
    </ligand>
</feature>
<feature type="binding site" evidence="1">
    <location>
        <position position="433"/>
    </location>
    <ligand>
        <name>Zn(2+)</name>
        <dbReference type="ChEBI" id="CHEBI:29105"/>
    </ligand>
</feature>
<proteinExistence type="inferred from homology"/>
<comment type="function">
    <text evidence="1">DNA ligase that catalyzes the formation of phosphodiester linkages between 5'-phosphoryl and 3'-hydroxyl groups in double-stranded DNA using NAD as a coenzyme and as the energy source for the reaction. It is essential for DNA replication and repair of damaged DNA.</text>
</comment>
<comment type="catalytic activity">
    <reaction evidence="1">
        <text>NAD(+) + (deoxyribonucleotide)n-3'-hydroxyl + 5'-phospho-(deoxyribonucleotide)m = (deoxyribonucleotide)n+m + AMP + beta-nicotinamide D-nucleotide.</text>
        <dbReference type="EC" id="6.5.1.2"/>
    </reaction>
</comment>
<comment type="cofactor">
    <cofactor evidence="1">
        <name>Mg(2+)</name>
        <dbReference type="ChEBI" id="CHEBI:18420"/>
    </cofactor>
    <cofactor evidence="1">
        <name>Mn(2+)</name>
        <dbReference type="ChEBI" id="CHEBI:29035"/>
    </cofactor>
</comment>
<comment type="similarity">
    <text evidence="1">Belongs to the NAD-dependent DNA ligase family. LigA subfamily.</text>
</comment>
<dbReference type="EC" id="6.5.1.2" evidence="1"/>
<dbReference type="EMBL" id="CP001011">
    <property type="protein sequence ID" value="ACB93445.1"/>
    <property type="molecule type" value="Genomic_DNA"/>
</dbReference>
<dbReference type="RefSeq" id="WP_004090351.1">
    <property type="nucleotide sequence ID" value="NC_010577.1"/>
</dbReference>
<dbReference type="SMR" id="B2I9S4"/>
<dbReference type="GeneID" id="93905801"/>
<dbReference type="KEGG" id="xfn:XfasM23_2047"/>
<dbReference type="HOGENOM" id="CLU_007764_2_1_6"/>
<dbReference type="Proteomes" id="UP000001698">
    <property type="component" value="Chromosome"/>
</dbReference>
<dbReference type="GO" id="GO:0005829">
    <property type="term" value="C:cytosol"/>
    <property type="evidence" value="ECO:0007669"/>
    <property type="project" value="TreeGrafter"/>
</dbReference>
<dbReference type="GO" id="GO:0003911">
    <property type="term" value="F:DNA ligase (NAD+) activity"/>
    <property type="evidence" value="ECO:0007669"/>
    <property type="project" value="UniProtKB-UniRule"/>
</dbReference>
<dbReference type="GO" id="GO:0046872">
    <property type="term" value="F:metal ion binding"/>
    <property type="evidence" value="ECO:0007669"/>
    <property type="project" value="UniProtKB-KW"/>
</dbReference>
<dbReference type="GO" id="GO:0006281">
    <property type="term" value="P:DNA repair"/>
    <property type="evidence" value="ECO:0007669"/>
    <property type="project" value="UniProtKB-KW"/>
</dbReference>
<dbReference type="GO" id="GO:0006260">
    <property type="term" value="P:DNA replication"/>
    <property type="evidence" value="ECO:0007669"/>
    <property type="project" value="UniProtKB-KW"/>
</dbReference>
<dbReference type="CDD" id="cd17748">
    <property type="entry name" value="BRCT_DNA_ligase_like"/>
    <property type="match status" value="1"/>
</dbReference>
<dbReference type="CDD" id="cd00114">
    <property type="entry name" value="LIGANc"/>
    <property type="match status" value="1"/>
</dbReference>
<dbReference type="FunFam" id="1.10.150.20:FF:000006">
    <property type="entry name" value="DNA ligase"/>
    <property type="match status" value="1"/>
</dbReference>
<dbReference type="FunFam" id="1.10.287.610:FF:000002">
    <property type="entry name" value="DNA ligase"/>
    <property type="match status" value="1"/>
</dbReference>
<dbReference type="FunFam" id="2.40.50.140:FF:000012">
    <property type="entry name" value="DNA ligase"/>
    <property type="match status" value="1"/>
</dbReference>
<dbReference type="FunFam" id="3.30.470.30:FF:000001">
    <property type="entry name" value="DNA ligase"/>
    <property type="match status" value="1"/>
</dbReference>
<dbReference type="Gene3D" id="6.20.10.30">
    <property type="match status" value="1"/>
</dbReference>
<dbReference type="Gene3D" id="1.10.150.20">
    <property type="entry name" value="5' to 3' exonuclease, C-terminal subdomain"/>
    <property type="match status" value="3"/>
</dbReference>
<dbReference type="Gene3D" id="3.40.50.10190">
    <property type="entry name" value="BRCT domain"/>
    <property type="match status" value="1"/>
</dbReference>
<dbReference type="Gene3D" id="3.30.470.30">
    <property type="entry name" value="DNA ligase/mRNA capping enzyme"/>
    <property type="match status" value="1"/>
</dbReference>
<dbReference type="Gene3D" id="1.10.287.610">
    <property type="entry name" value="Helix hairpin bin"/>
    <property type="match status" value="1"/>
</dbReference>
<dbReference type="Gene3D" id="2.40.50.140">
    <property type="entry name" value="Nucleic acid-binding proteins"/>
    <property type="match status" value="1"/>
</dbReference>
<dbReference type="HAMAP" id="MF_01588">
    <property type="entry name" value="DNA_ligase_A"/>
    <property type="match status" value="1"/>
</dbReference>
<dbReference type="InterPro" id="IPR001357">
    <property type="entry name" value="BRCT_dom"/>
</dbReference>
<dbReference type="InterPro" id="IPR036420">
    <property type="entry name" value="BRCT_dom_sf"/>
</dbReference>
<dbReference type="InterPro" id="IPR041663">
    <property type="entry name" value="DisA/LigA_HHH"/>
</dbReference>
<dbReference type="InterPro" id="IPR001679">
    <property type="entry name" value="DNA_ligase"/>
</dbReference>
<dbReference type="InterPro" id="IPR018239">
    <property type="entry name" value="DNA_ligase_AS"/>
</dbReference>
<dbReference type="InterPro" id="IPR013839">
    <property type="entry name" value="DNAligase_adenylation"/>
</dbReference>
<dbReference type="InterPro" id="IPR013840">
    <property type="entry name" value="DNAligase_N"/>
</dbReference>
<dbReference type="InterPro" id="IPR012340">
    <property type="entry name" value="NA-bd_OB-fold"/>
</dbReference>
<dbReference type="InterPro" id="IPR004150">
    <property type="entry name" value="NAD_DNA_ligase_OB"/>
</dbReference>
<dbReference type="InterPro" id="IPR010994">
    <property type="entry name" value="RuvA_2-like"/>
</dbReference>
<dbReference type="InterPro" id="IPR004149">
    <property type="entry name" value="Znf_DNAligase_C4"/>
</dbReference>
<dbReference type="NCBIfam" id="TIGR00575">
    <property type="entry name" value="dnlj"/>
    <property type="match status" value="1"/>
</dbReference>
<dbReference type="NCBIfam" id="NF005932">
    <property type="entry name" value="PRK07956.1"/>
    <property type="match status" value="1"/>
</dbReference>
<dbReference type="PANTHER" id="PTHR23389">
    <property type="entry name" value="CHROMOSOME TRANSMISSION FIDELITY FACTOR 18"/>
    <property type="match status" value="1"/>
</dbReference>
<dbReference type="PANTHER" id="PTHR23389:SF9">
    <property type="entry name" value="DNA LIGASE"/>
    <property type="match status" value="1"/>
</dbReference>
<dbReference type="Pfam" id="PF00533">
    <property type="entry name" value="BRCT"/>
    <property type="match status" value="1"/>
</dbReference>
<dbReference type="Pfam" id="PF01653">
    <property type="entry name" value="DNA_ligase_aden"/>
    <property type="match status" value="1"/>
</dbReference>
<dbReference type="Pfam" id="PF03120">
    <property type="entry name" value="DNA_ligase_OB"/>
    <property type="match status" value="1"/>
</dbReference>
<dbReference type="Pfam" id="PF03119">
    <property type="entry name" value="DNA_ligase_ZBD"/>
    <property type="match status" value="1"/>
</dbReference>
<dbReference type="Pfam" id="PF12826">
    <property type="entry name" value="HHH_2"/>
    <property type="match status" value="1"/>
</dbReference>
<dbReference type="Pfam" id="PF22745">
    <property type="entry name" value="Nlig-Ia"/>
    <property type="match status" value="1"/>
</dbReference>
<dbReference type="PIRSF" id="PIRSF001604">
    <property type="entry name" value="LigA"/>
    <property type="match status" value="1"/>
</dbReference>
<dbReference type="SMART" id="SM00292">
    <property type="entry name" value="BRCT"/>
    <property type="match status" value="1"/>
</dbReference>
<dbReference type="SMART" id="SM00532">
    <property type="entry name" value="LIGANc"/>
    <property type="match status" value="1"/>
</dbReference>
<dbReference type="SUPFAM" id="SSF52113">
    <property type="entry name" value="BRCT domain"/>
    <property type="match status" value="1"/>
</dbReference>
<dbReference type="SUPFAM" id="SSF56091">
    <property type="entry name" value="DNA ligase/mRNA capping enzyme, catalytic domain"/>
    <property type="match status" value="1"/>
</dbReference>
<dbReference type="SUPFAM" id="SSF50249">
    <property type="entry name" value="Nucleic acid-binding proteins"/>
    <property type="match status" value="1"/>
</dbReference>
<dbReference type="SUPFAM" id="SSF47781">
    <property type="entry name" value="RuvA domain 2-like"/>
    <property type="match status" value="2"/>
</dbReference>
<dbReference type="PROSITE" id="PS50172">
    <property type="entry name" value="BRCT"/>
    <property type="match status" value="1"/>
</dbReference>
<dbReference type="PROSITE" id="PS01055">
    <property type="entry name" value="DNA_LIGASE_N1"/>
    <property type="match status" value="1"/>
</dbReference>
<accession>B2I9S4</accession>
<protein>
    <recommendedName>
        <fullName evidence="1">DNA ligase</fullName>
        <ecNumber evidence="1">6.5.1.2</ecNumber>
    </recommendedName>
    <alternativeName>
        <fullName evidence="1">Polydeoxyribonucleotide synthase [NAD(+)]</fullName>
    </alternativeName>
</protein>
<sequence>MIPLDPAQRAAELRRRLQEANYHYHVLDQPRIPDADYDRMLRELDALEATYPDLATPDSPTQRVGHTIATAFSEVRHTVPMLSLNNAFSDPEVLEFVRRITARLGETAPGFSAEPKLDGLAISLRYQNGIFIQGATRGDGVTGEDVTANLRTLPTIPQRLQSDTWPTVLEVRGEVYMPRPDFEAYNTQARLRGWKVLANPRNGAAGSLRQLDPHITAQRPLSFYAYGIGEVTDDVAFHRHSEILASLRAWGFPVSPLVELVYGSEGLLNYYRRMETIRDTLPFDIDGIVYKLDDLSGQHEMGFVARAPRWAIAHKFPAQEQTTTVEAIEIQIGRTGAATPVARLTPVQVAGVTVTSVTLHNADQIARLDVRIGDTVIVRRAGDVIPEVVAVITDSRPPGATAWSMPMACPVCGSEIVRETGAAVWRCSGELACPAQRKEAIRHFVSRRAMDVEGLGVKCIELLVDAAVVHGVADLYHLSLDQLLRLRLVTNAQTPTMLLREARDHVTGMRYQQLEEILRTVGVDLSGEGDVPKHWQIDVLRAQWPDFDWNHKKIATKWAQNLIAAIDRSRQTTLERFLFALGMTHVGETTAKALAHSFGDLAIIRQLPWPLFKCVPDIGGEVARAIGHFMDQPANQQAIDDLVERGVRITDAHPPTSTLRDQLTLASLLEHLEIPKITPLRAVQLATLAPTLPLLAEADLDALLQAGVPQPAAQSLTEWFQSPDNISLARRLQHCCDVLLAQLLSPDRAHTAPLNGQSVVLTGKLASLTREAAATRLESLGAKIVGSVSKKTSFLVAGEDPGSKLDKAHALHVDIWDEARLLAFLEQYSAQ</sequence>
<reference key="1">
    <citation type="journal article" date="2010" name="J. Bacteriol.">
        <title>Whole genome sequences of two Xylella fastidiosa strains (M12 and M23) causing almond leaf scorch disease in California.</title>
        <authorList>
            <person name="Chen J."/>
            <person name="Xie G."/>
            <person name="Han S."/>
            <person name="Chertkov O."/>
            <person name="Sims D."/>
            <person name="Civerolo E.L."/>
        </authorList>
    </citation>
    <scope>NUCLEOTIDE SEQUENCE [LARGE SCALE GENOMIC DNA]</scope>
    <source>
        <strain>M23</strain>
    </source>
</reference>
<evidence type="ECO:0000255" key="1">
    <source>
        <dbReference type="HAMAP-Rule" id="MF_01588"/>
    </source>
</evidence>